<keyword id="KW-0004">4Fe-4S</keyword>
<keyword id="KW-0010">Activator</keyword>
<keyword id="KW-0963">Cytoplasm</keyword>
<keyword id="KW-0238">DNA-binding</keyword>
<keyword id="KW-0408">Iron</keyword>
<keyword id="KW-0411">Iron-sulfur</keyword>
<keyword id="KW-0479">Metal-binding</keyword>
<keyword id="KW-1185">Reference proteome</keyword>
<keyword id="KW-0804">Transcription</keyword>
<keyword id="KW-0805">Transcription regulation</keyword>
<proteinExistence type="evidence at transcript level"/>
<dbReference type="EMBL" id="Z49884">
    <property type="protein sequence ID" value="CAA90042.1"/>
    <property type="molecule type" value="Genomic_DNA"/>
</dbReference>
<dbReference type="EMBL" id="AL009126">
    <property type="protein sequence ID" value="CAB15759.1"/>
    <property type="molecule type" value="Genomic_DNA"/>
</dbReference>
<dbReference type="PIR" id="S60081">
    <property type="entry name" value="S60081"/>
</dbReference>
<dbReference type="RefSeq" id="NP_391612.1">
    <property type="nucleotide sequence ID" value="NC_000964.3"/>
</dbReference>
<dbReference type="RefSeq" id="WP_003243241.1">
    <property type="nucleotide sequence ID" value="NZ_OZ025638.1"/>
</dbReference>
<dbReference type="SMR" id="P46908"/>
<dbReference type="FunCoup" id="P46908">
    <property type="interactions" value="295"/>
</dbReference>
<dbReference type="STRING" id="224308.BSU37310"/>
<dbReference type="PaxDb" id="224308-BSU37310"/>
<dbReference type="EnsemblBacteria" id="CAB15759">
    <property type="protein sequence ID" value="CAB15759"/>
    <property type="gene ID" value="BSU_37310"/>
</dbReference>
<dbReference type="GeneID" id="937050"/>
<dbReference type="KEGG" id="bsu:BSU37310"/>
<dbReference type="PATRIC" id="fig|224308.179.peg.4042"/>
<dbReference type="eggNOG" id="COG0664">
    <property type="taxonomic scope" value="Bacteria"/>
</dbReference>
<dbReference type="InParanoid" id="P46908"/>
<dbReference type="OrthoDB" id="9810708at2"/>
<dbReference type="PhylomeDB" id="P46908"/>
<dbReference type="BioCyc" id="BSUB:BSU37310-MONOMER"/>
<dbReference type="Proteomes" id="UP000001570">
    <property type="component" value="Chromosome"/>
</dbReference>
<dbReference type="GO" id="GO:0005829">
    <property type="term" value="C:cytosol"/>
    <property type="evidence" value="ECO:0000318"/>
    <property type="project" value="GO_Central"/>
</dbReference>
<dbReference type="GO" id="GO:0051539">
    <property type="term" value="F:4 iron, 4 sulfur cluster binding"/>
    <property type="evidence" value="ECO:0007669"/>
    <property type="project" value="UniProtKB-KW"/>
</dbReference>
<dbReference type="GO" id="GO:0003677">
    <property type="term" value="F:DNA binding"/>
    <property type="evidence" value="ECO:0007669"/>
    <property type="project" value="UniProtKB-KW"/>
</dbReference>
<dbReference type="GO" id="GO:0003700">
    <property type="term" value="F:DNA-binding transcription factor activity"/>
    <property type="evidence" value="ECO:0000318"/>
    <property type="project" value="GO_Central"/>
</dbReference>
<dbReference type="GO" id="GO:0046872">
    <property type="term" value="F:metal ion binding"/>
    <property type="evidence" value="ECO:0007669"/>
    <property type="project" value="UniProtKB-KW"/>
</dbReference>
<dbReference type="CDD" id="cd00038">
    <property type="entry name" value="CAP_ED"/>
    <property type="match status" value="1"/>
</dbReference>
<dbReference type="CDD" id="cd00092">
    <property type="entry name" value="HTH_CRP"/>
    <property type="match status" value="1"/>
</dbReference>
<dbReference type="Gene3D" id="2.60.120.10">
    <property type="entry name" value="Jelly Rolls"/>
    <property type="match status" value="1"/>
</dbReference>
<dbReference type="Gene3D" id="1.10.10.10">
    <property type="entry name" value="Winged helix-like DNA-binding domain superfamily/Winged helix DNA-binding domain"/>
    <property type="match status" value="1"/>
</dbReference>
<dbReference type="InterPro" id="IPR000595">
    <property type="entry name" value="cNMP-bd_dom"/>
</dbReference>
<dbReference type="InterPro" id="IPR018490">
    <property type="entry name" value="cNMP-bd_dom_sf"/>
</dbReference>
<dbReference type="InterPro" id="IPR050397">
    <property type="entry name" value="Env_Response_Regulators"/>
</dbReference>
<dbReference type="InterPro" id="IPR012318">
    <property type="entry name" value="HTH_CRP"/>
</dbReference>
<dbReference type="InterPro" id="IPR014710">
    <property type="entry name" value="RmlC-like_jellyroll"/>
</dbReference>
<dbReference type="InterPro" id="IPR018335">
    <property type="entry name" value="Tscrpt_reg_HTH_Crp-type_CS"/>
</dbReference>
<dbReference type="InterPro" id="IPR036388">
    <property type="entry name" value="WH-like_DNA-bd_sf"/>
</dbReference>
<dbReference type="InterPro" id="IPR036390">
    <property type="entry name" value="WH_DNA-bd_sf"/>
</dbReference>
<dbReference type="PANTHER" id="PTHR24567">
    <property type="entry name" value="CRP FAMILY TRANSCRIPTIONAL REGULATORY PROTEIN"/>
    <property type="match status" value="1"/>
</dbReference>
<dbReference type="PANTHER" id="PTHR24567:SF74">
    <property type="entry name" value="HTH-TYPE TRANSCRIPTIONAL REGULATOR ARCR"/>
    <property type="match status" value="1"/>
</dbReference>
<dbReference type="Pfam" id="PF00027">
    <property type="entry name" value="cNMP_binding"/>
    <property type="match status" value="1"/>
</dbReference>
<dbReference type="Pfam" id="PF00325">
    <property type="entry name" value="Crp"/>
    <property type="match status" value="1"/>
</dbReference>
<dbReference type="SMART" id="SM00100">
    <property type="entry name" value="cNMP"/>
    <property type="match status" value="1"/>
</dbReference>
<dbReference type="SMART" id="SM00419">
    <property type="entry name" value="HTH_CRP"/>
    <property type="match status" value="1"/>
</dbReference>
<dbReference type="SUPFAM" id="SSF51206">
    <property type="entry name" value="cAMP-binding domain-like"/>
    <property type="match status" value="1"/>
</dbReference>
<dbReference type="SUPFAM" id="SSF46785">
    <property type="entry name" value="Winged helix' DNA-binding domain"/>
    <property type="match status" value="1"/>
</dbReference>
<dbReference type="PROSITE" id="PS50042">
    <property type="entry name" value="CNMP_BINDING_3"/>
    <property type="match status" value="1"/>
</dbReference>
<dbReference type="PROSITE" id="PS00042">
    <property type="entry name" value="HTH_CRP_1"/>
    <property type="match status" value="1"/>
</dbReference>
<dbReference type="PROSITE" id="PS51063">
    <property type="entry name" value="HTH_CRP_2"/>
    <property type="match status" value="1"/>
</dbReference>
<protein>
    <recommendedName>
        <fullName>Anaerobic regulatory protein</fullName>
    </recommendedName>
</protein>
<sequence length="238" mass="27218">MNFLSVRPSDSDLISSDLYELLESISTKRKMEKHTYLFREGMDAEELYLIQSGLIEIGKLTSDGKDLTLRICQKHDIVGELTLFTEEPRYMLSAKVLEDGEVLVINKNKLEKELIQNGALTFEFMKWMSTHLRKIQSKIRDLLLHGKKGALYSTLIRLSNSYGVERSDGILINIVLTNQDLAKFCAAARESVNRMLGDLRKKGVISIDESGKIILHKRDYLRCEIECENCPLEICNID</sequence>
<comment type="function">
    <text>It is involved in the activation of genes necessary for anaerobic respiration.</text>
</comment>
<comment type="cofactor">
    <cofactor evidence="1">
        <name>[4Fe-4S] cluster</name>
        <dbReference type="ChEBI" id="CHEBI:49883"/>
    </cofactor>
    <text evidence="1">Binds 1 [4Fe-4S] cluster per subunit.</text>
</comment>
<comment type="subunit">
    <text evidence="1">Homodimer.</text>
</comment>
<comment type="subcellular location">
    <subcellularLocation>
        <location evidence="4">Cytoplasm</location>
    </subcellularLocation>
</comment>
<comment type="induction">
    <text>By anaerobiosis.</text>
</comment>
<comment type="domain">
    <text>The cysteine cluster which is probably involved in the coordination of the [4Fe-4S] cluster is located at the C-terminal part of the protein.</text>
</comment>
<organism>
    <name type="scientific">Bacillus subtilis (strain 168)</name>
    <dbReference type="NCBI Taxonomy" id="224308"/>
    <lineage>
        <taxon>Bacteria</taxon>
        <taxon>Bacillati</taxon>
        <taxon>Bacillota</taxon>
        <taxon>Bacilli</taxon>
        <taxon>Bacillales</taxon>
        <taxon>Bacillaceae</taxon>
        <taxon>Bacillus</taxon>
    </lineage>
</organism>
<name>FNR_BACSU</name>
<gene>
    <name type="primary">fnr</name>
    <name type="ordered locus">BSU37310</name>
</gene>
<reference key="1">
    <citation type="journal article" date="1995" name="EMBO J.">
        <title>Anaerobic transcription activation in Bacillus subtilis: identification of distinct FNR-dependent and -independent regulatory mechanisms.</title>
        <authorList>
            <person name="Cruz Ramos H."/>
            <person name="Boursier L."/>
            <person name="Moszer I."/>
            <person name="Kunst F."/>
            <person name="Danchin A."/>
            <person name="Glaser P."/>
        </authorList>
    </citation>
    <scope>NUCLEOTIDE SEQUENCE [GENOMIC DNA]</scope>
    <source>
        <strain>168</strain>
    </source>
</reference>
<reference key="2">
    <citation type="journal article" date="1997" name="Nature">
        <title>The complete genome sequence of the Gram-positive bacterium Bacillus subtilis.</title>
        <authorList>
            <person name="Kunst F."/>
            <person name="Ogasawara N."/>
            <person name="Moszer I."/>
            <person name="Albertini A.M."/>
            <person name="Alloni G."/>
            <person name="Azevedo V."/>
            <person name="Bertero M.G."/>
            <person name="Bessieres P."/>
            <person name="Bolotin A."/>
            <person name="Borchert S."/>
            <person name="Borriss R."/>
            <person name="Boursier L."/>
            <person name="Brans A."/>
            <person name="Braun M."/>
            <person name="Brignell S.C."/>
            <person name="Bron S."/>
            <person name="Brouillet S."/>
            <person name="Bruschi C.V."/>
            <person name="Caldwell B."/>
            <person name="Capuano V."/>
            <person name="Carter N.M."/>
            <person name="Choi S.-K."/>
            <person name="Codani J.-J."/>
            <person name="Connerton I.F."/>
            <person name="Cummings N.J."/>
            <person name="Daniel R.A."/>
            <person name="Denizot F."/>
            <person name="Devine K.M."/>
            <person name="Duesterhoeft A."/>
            <person name="Ehrlich S.D."/>
            <person name="Emmerson P.T."/>
            <person name="Entian K.-D."/>
            <person name="Errington J."/>
            <person name="Fabret C."/>
            <person name="Ferrari E."/>
            <person name="Foulger D."/>
            <person name="Fritz C."/>
            <person name="Fujita M."/>
            <person name="Fujita Y."/>
            <person name="Fuma S."/>
            <person name="Galizzi A."/>
            <person name="Galleron N."/>
            <person name="Ghim S.-Y."/>
            <person name="Glaser P."/>
            <person name="Goffeau A."/>
            <person name="Golightly E.J."/>
            <person name="Grandi G."/>
            <person name="Guiseppi G."/>
            <person name="Guy B.J."/>
            <person name="Haga K."/>
            <person name="Haiech J."/>
            <person name="Harwood C.R."/>
            <person name="Henaut A."/>
            <person name="Hilbert H."/>
            <person name="Holsappel S."/>
            <person name="Hosono S."/>
            <person name="Hullo M.-F."/>
            <person name="Itaya M."/>
            <person name="Jones L.-M."/>
            <person name="Joris B."/>
            <person name="Karamata D."/>
            <person name="Kasahara Y."/>
            <person name="Klaerr-Blanchard M."/>
            <person name="Klein C."/>
            <person name="Kobayashi Y."/>
            <person name="Koetter P."/>
            <person name="Koningstein G."/>
            <person name="Krogh S."/>
            <person name="Kumano M."/>
            <person name="Kurita K."/>
            <person name="Lapidus A."/>
            <person name="Lardinois S."/>
            <person name="Lauber J."/>
            <person name="Lazarevic V."/>
            <person name="Lee S.-M."/>
            <person name="Levine A."/>
            <person name="Liu H."/>
            <person name="Masuda S."/>
            <person name="Mauel C."/>
            <person name="Medigue C."/>
            <person name="Medina N."/>
            <person name="Mellado R.P."/>
            <person name="Mizuno M."/>
            <person name="Moestl D."/>
            <person name="Nakai S."/>
            <person name="Noback M."/>
            <person name="Noone D."/>
            <person name="O'Reilly M."/>
            <person name="Ogawa K."/>
            <person name="Ogiwara A."/>
            <person name="Oudega B."/>
            <person name="Park S.-H."/>
            <person name="Parro V."/>
            <person name="Pohl T.M."/>
            <person name="Portetelle D."/>
            <person name="Porwollik S."/>
            <person name="Prescott A.M."/>
            <person name="Presecan E."/>
            <person name="Pujic P."/>
            <person name="Purnelle B."/>
            <person name="Rapoport G."/>
            <person name="Rey M."/>
            <person name="Reynolds S."/>
            <person name="Rieger M."/>
            <person name="Rivolta C."/>
            <person name="Rocha E."/>
            <person name="Roche B."/>
            <person name="Rose M."/>
            <person name="Sadaie Y."/>
            <person name="Sato T."/>
            <person name="Scanlan E."/>
            <person name="Schleich S."/>
            <person name="Schroeter R."/>
            <person name="Scoffone F."/>
            <person name="Sekiguchi J."/>
            <person name="Sekowska A."/>
            <person name="Seror S.J."/>
            <person name="Serror P."/>
            <person name="Shin B.-S."/>
            <person name="Soldo B."/>
            <person name="Sorokin A."/>
            <person name="Tacconi E."/>
            <person name="Takagi T."/>
            <person name="Takahashi H."/>
            <person name="Takemaru K."/>
            <person name="Takeuchi M."/>
            <person name="Tamakoshi A."/>
            <person name="Tanaka T."/>
            <person name="Terpstra P."/>
            <person name="Tognoni A."/>
            <person name="Tosato V."/>
            <person name="Uchiyama S."/>
            <person name="Vandenbol M."/>
            <person name="Vannier F."/>
            <person name="Vassarotti A."/>
            <person name="Viari A."/>
            <person name="Wambutt R."/>
            <person name="Wedler E."/>
            <person name="Wedler H."/>
            <person name="Weitzenegger T."/>
            <person name="Winters P."/>
            <person name="Wipat A."/>
            <person name="Yamamoto H."/>
            <person name="Yamane K."/>
            <person name="Yasumoto K."/>
            <person name="Yata K."/>
            <person name="Yoshida K."/>
            <person name="Yoshikawa H.-F."/>
            <person name="Zumstein E."/>
            <person name="Yoshikawa H."/>
            <person name="Danchin A."/>
        </authorList>
    </citation>
    <scope>NUCLEOTIDE SEQUENCE [LARGE SCALE GENOMIC DNA]</scope>
    <source>
        <strain>168</strain>
    </source>
</reference>
<accession>P46908</accession>
<evidence type="ECO:0000250" key="1"/>
<evidence type="ECO:0000255" key="2"/>
<evidence type="ECO:0000255" key="3">
    <source>
        <dbReference type="PROSITE-ProRule" id="PRU00387"/>
    </source>
</evidence>
<evidence type="ECO:0000305" key="4"/>
<feature type="chain" id="PRO_0000100173" description="Anaerobic regulatory protein">
    <location>
        <begin position="1"/>
        <end position="238"/>
    </location>
</feature>
<feature type="domain" description="HTH crp-type" evidence="3">
    <location>
        <begin position="145"/>
        <end position="219"/>
    </location>
</feature>
<feature type="DNA-binding region" description="H-T-H motif" evidence="3">
    <location>
        <begin position="178"/>
        <end position="197"/>
    </location>
</feature>
<feature type="region of interest" description="Essential for the oxygen-regulated activity">
    <location>
        <begin position="223"/>
        <end position="235"/>
    </location>
</feature>
<feature type="binding site" evidence="2">
    <location>
        <position position="223"/>
    </location>
    <ligand>
        <name>[4Fe-4S] cluster</name>
        <dbReference type="ChEBI" id="CHEBI:49883"/>
    </ligand>
</feature>
<feature type="binding site" evidence="2">
    <location>
        <position position="227"/>
    </location>
    <ligand>
        <name>[4Fe-4S] cluster</name>
        <dbReference type="ChEBI" id="CHEBI:49883"/>
    </ligand>
</feature>
<feature type="binding site" evidence="2">
    <location>
        <position position="230"/>
    </location>
    <ligand>
        <name>[4Fe-4S] cluster</name>
        <dbReference type="ChEBI" id="CHEBI:49883"/>
    </ligand>
</feature>
<feature type="binding site" evidence="2">
    <location>
        <position position="235"/>
    </location>
    <ligand>
        <name>[4Fe-4S] cluster</name>
        <dbReference type="ChEBI" id="CHEBI:49883"/>
    </ligand>
</feature>